<accession>Q88FY4</accession>
<evidence type="ECO:0000250" key="1">
    <source>
        <dbReference type="UniProtKB" id="Q5YXQ1"/>
    </source>
</evidence>
<evidence type="ECO:0000255" key="2">
    <source>
        <dbReference type="HAMAP-Rule" id="MF_00943"/>
    </source>
</evidence>
<evidence type="ECO:0000269" key="3">
    <source>
    </source>
</evidence>
<evidence type="ECO:0000269" key="4">
    <source>
    </source>
</evidence>
<evidence type="ECO:0000305" key="5">
    <source>
    </source>
</evidence>
<proteinExistence type="evidence at transcript level"/>
<sequence>MTQLYRIGQIVPSSNTTMETEIPAMLNARQAIRPERFTFHSSRMRMKQVKKEELAAMDAESDRCAVELSDAKVDVLGYACLVAIMAMGLGYHRQSEKRLQQATADNDALAPVITSAGALVEALHVMKAKRIAIVAPYMKPLTELVVNYIREEGFEVQDWRALEIPDNLAVARHDPANLPGIVAGMDLEGVDVVVLSACVQMQSLPAVAKVEAQTGKPVVTAAIATTYAMLKALDLEPIVPGAGALLSGAY</sequence>
<protein>
    <recommendedName>
        <fullName evidence="2">Maleate isomerase</fullName>
        <ecNumber evidence="2">5.2.1.1</ecNumber>
    </recommendedName>
    <alternativeName>
        <fullName evidence="2">Maleate cis-trans isomerase</fullName>
    </alternativeName>
    <alternativeName>
        <fullName>Nicotinate degradation protein E</fullName>
    </alternativeName>
</protein>
<organism>
    <name type="scientific">Pseudomonas putida (strain ATCC 47054 / DSM 6125 / CFBP 8728 / NCIMB 11950 / KT2440)</name>
    <dbReference type="NCBI Taxonomy" id="160488"/>
    <lineage>
        <taxon>Bacteria</taxon>
        <taxon>Pseudomonadati</taxon>
        <taxon>Pseudomonadota</taxon>
        <taxon>Gammaproteobacteria</taxon>
        <taxon>Pseudomonadales</taxon>
        <taxon>Pseudomonadaceae</taxon>
        <taxon>Pseudomonas</taxon>
    </lineage>
</organism>
<keyword id="KW-0058">Aromatic hydrocarbons catabolism</keyword>
<keyword id="KW-0413">Isomerase</keyword>
<keyword id="KW-1185">Reference proteome</keyword>
<gene>
    <name evidence="2" type="primary">maiA</name>
    <name type="synonym">nicE</name>
    <name type="ordered locus">PP_3942</name>
</gene>
<name>MAIA_PSEPK</name>
<feature type="chain" id="PRO_0000418473" description="Maleate isomerase">
    <location>
        <begin position="1"/>
        <end position="250"/>
    </location>
</feature>
<feature type="active site" description="Nucleophile" evidence="1">
    <location>
        <position position="80"/>
    </location>
</feature>
<feature type="active site" description="Proton donor" evidence="1">
    <location>
        <position position="198"/>
    </location>
</feature>
<feature type="binding site" evidence="1">
    <location>
        <position position="15"/>
    </location>
    <ligand>
        <name>substrate</name>
    </ligand>
</feature>
<feature type="binding site" evidence="1">
    <location>
        <begin position="80"/>
        <end position="82"/>
    </location>
    <ligand>
        <name>substrate</name>
    </ligand>
</feature>
<feature type="binding site" evidence="1">
    <location>
        <position position="137"/>
    </location>
    <ligand>
        <name>substrate</name>
    </ligand>
</feature>
<feature type="binding site" evidence="1">
    <location>
        <position position="167"/>
    </location>
    <ligand>
        <name>substrate</name>
    </ligand>
</feature>
<feature type="binding site" evidence="1">
    <location>
        <begin position="199"/>
        <end position="200"/>
    </location>
    <ligand>
        <name>substrate</name>
    </ligand>
</feature>
<feature type="modified residue" description="S-(2-succinyl)cysteine" evidence="1">
    <location>
        <position position="80"/>
    </location>
</feature>
<comment type="function">
    <text evidence="5">Catalyzes cis-trans isomerization of the C2-C3 double bond in maleate to yield fumarate in the aerobic nicotinate degradation pathway.</text>
</comment>
<comment type="catalytic activity">
    <reaction evidence="2">
        <text>maleate = fumarate</text>
        <dbReference type="Rhea" id="RHEA:13169"/>
        <dbReference type="ChEBI" id="CHEBI:29806"/>
        <dbReference type="ChEBI" id="CHEBI:30780"/>
        <dbReference type="EC" id="5.2.1.1"/>
    </reaction>
</comment>
<comment type="pathway">
    <text evidence="3">Cofactor degradation; nicotinate degradation.</text>
</comment>
<comment type="subunit">
    <text evidence="2">Homodimer.</text>
</comment>
<comment type="induction">
    <text evidence="4">Repressed by NicR in the absence of 6-hydroxynicotinate (6HNA) inducer. In presence of 6HNA, repression is alleviated.</text>
</comment>
<comment type="miscellaneous">
    <text evidence="2">Reaction is initiated by nucleophilic attack of cysteine at the double bond, yielding a covalent succinylcysteine-like intermediate.</text>
</comment>
<comment type="similarity">
    <text evidence="2">Belongs to the maleate isomerase family.</text>
</comment>
<reference key="1">
    <citation type="journal article" date="2002" name="Environ. Microbiol.">
        <title>Complete genome sequence and comparative analysis of the metabolically versatile Pseudomonas putida KT2440.</title>
        <authorList>
            <person name="Nelson K.E."/>
            <person name="Weinel C."/>
            <person name="Paulsen I.T."/>
            <person name="Dodson R.J."/>
            <person name="Hilbert H."/>
            <person name="Martins dos Santos V.A.P."/>
            <person name="Fouts D.E."/>
            <person name="Gill S.R."/>
            <person name="Pop M."/>
            <person name="Holmes M."/>
            <person name="Brinkac L.M."/>
            <person name="Beanan M.J."/>
            <person name="DeBoy R.T."/>
            <person name="Daugherty S.C."/>
            <person name="Kolonay J.F."/>
            <person name="Madupu R."/>
            <person name="Nelson W.C."/>
            <person name="White O."/>
            <person name="Peterson J.D."/>
            <person name="Khouri H.M."/>
            <person name="Hance I."/>
            <person name="Chris Lee P."/>
            <person name="Holtzapple E.K."/>
            <person name="Scanlan D."/>
            <person name="Tran K."/>
            <person name="Moazzez A."/>
            <person name="Utterback T.R."/>
            <person name="Rizzo M."/>
            <person name="Lee K."/>
            <person name="Kosack D."/>
            <person name="Moestl D."/>
            <person name="Wedler H."/>
            <person name="Lauber J."/>
            <person name="Stjepandic D."/>
            <person name="Hoheisel J."/>
            <person name="Straetz M."/>
            <person name="Heim S."/>
            <person name="Kiewitz C."/>
            <person name="Eisen J.A."/>
            <person name="Timmis K.N."/>
            <person name="Duesterhoeft A."/>
            <person name="Tuemmler B."/>
            <person name="Fraser C.M."/>
        </authorList>
    </citation>
    <scope>NUCLEOTIDE SEQUENCE [LARGE SCALE GENOMIC DNA]</scope>
    <source>
        <strain>ATCC 47054 / DSM 6125 / CFBP 8728 / NCIMB 11950 / KT2440</strain>
    </source>
</reference>
<reference key="2">
    <citation type="journal article" date="2008" name="Proc. Natl. Acad. Sci. U.S.A.">
        <title>Deciphering the genetic determinants for aerobic nicotinic acid degradation: the nic cluster from Pseudomonas putida KT2440.</title>
        <authorList>
            <person name="Jimenez J.I."/>
            <person name="Canales A."/>
            <person name="Jimenez-Barbero J."/>
            <person name="Ginalski K."/>
            <person name="Rychlewski L."/>
            <person name="Garcia J.L."/>
            <person name="Diaz E."/>
        </authorList>
    </citation>
    <scope>PATHWAY</scope>
    <scope>FUNCTION</scope>
    <source>
        <strain>ATCC 47054 / DSM 6125 / CFBP 8728 / NCIMB 11950 / KT2440</strain>
    </source>
</reference>
<reference key="3">
    <citation type="journal article" date="2011" name="Environ. Microbiol.">
        <title>A finely tuned regulatory circuit of the nicotinic acid degradation pathway in Pseudomonas putida.</title>
        <authorList>
            <person name="Jimenez J.I."/>
            <person name="Juarez J.F."/>
            <person name="Garcia J.L."/>
            <person name="Diaz E."/>
        </authorList>
    </citation>
    <scope>INDUCTION</scope>
    <source>
        <strain>ATCC 47054 / DSM 6125 / CFBP 8728 / NCIMB 11950 / KT2440</strain>
    </source>
</reference>
<dbReference type="EC" id="5.2.1.1" evidence="2"/>
<dbReference type="EMBL" id="AE015451">
    <property type="protein sequence ID" value="AAN69536.1"/>
    <property type="molecule type" value="Genomic_DNA"/>
</dbReference>
<dbReference type="RefSeq" id="NP_746072.1">
    <property type="nucleotide sequence ID" value="NC_002947.4"/>
</dbReference>
<dbReference type="RefSeq" id="WP_003251112.1">
    <property type="nucleotide sequence ID" value="NZ_CP169744.1"/>
</dbReference>
<dbReference type="SMR" id="Q88FY4"/>
<dbReference type="STRING" id="160488.PP_3942"/>
<dbReference type="PaxDb" id="160488-PP_3942"/>
<dbReference type="KEGG" id="ppu:PP_3942"/>
<dbReference type="PATRIC" id="fig|160488.4.peg.4197"/>
<dbReference type="eggNOG" id="COG3473">
    <property type="taxonomic scope" value="Bacteria"/>
</dbReference>
<dbReference type="HOGENOM" id="CLU_068086_0_0_6"/>
<dbReference type="OrthoDB" id="483160at2"/>
<dbReference type="PhylomeDB" id="Q88FY4"/>
<dbReference type="BioCyc" id="MetaCyc:G1G01-4207-MONOMER"/>
<dbReference type="BioCyc" id="PPUT160488:G1G01-4207-MONOMER"/>
<dbReference type="UniPathway" id="UPA01010"/>
<dbReference type="Proteomes" id="UP000000556">
    <property type="component" value="Chromosome"/>
</dbReference>
<dbReference type="GO" id="GO:0050076">
    <property type="term" value="F:maleate isomerase activity"/>
    <property type="evidence" value="ECO:0000250"/>
    <property type="project" value="UniProtKB"/>
</dbReference>
<dbReference type="GO" id="GO:0009056">
    <property type="term" value="P:catabolic process"/>
    <property type="evidence" value="ECO:0007669"/>
    <property type="project" value="UniProtKB-KW"/>
</dbReference>
<dbReference type="GO" id="GO:0051289">
    <property type="term" value="P:protein homotetramerization"/>
    <property type="evidence" value="ECO:0000250"/>
    <property type="project" value="UniProtKB"/>
</dbReference>
<dbReference type="FunFam" id="3.40.50.12500:FF:000002">
    <property type="entry name" value="Maleate isomerase"/>
    <property type="match status" value="1"/>
</dbReference>
<dbReference type="Gene3D" id="3.40.50.12500">
    <property type="match status" value="1"/>
</dbReference>
<dbReference type="HAMAP" id="MF_00943">
    <property type="entry name" value="Maleate_isomerase"/>
    <property type="match status" value="1"/>
</dbReference>
<dbReference type="InterPro" id="IPR053714">
    <property type="entry name" value="Iso_Racemase_Enz_sf"/>
</dbReference>
<dbReference type="InterPro" id="IPR026286">
    <property type="entry name" value="MaiA/AMDase"/>
</dbReference>
<dbReference type="InterPro" id="IPR028615">
    <property type="entry name" value="Maleate_isomerase"/>
</dbReference>
<dbReference type="PANTHER" id="PTHR40267">
    <property type="entry name" value="BLR3294 PROTEIN"/>
    <property type="match status" value="1"/>
</dbReference>
<dbReference type="PANTHER" id="PTHR40267:SF1">
    <property type="entry name" value="BLR3294 PROTEIN"/>
    <property type="match status" value="1"/>
</dbReference>
<dbReference type="Pfam" id="PF17645">
    <property type="entry name" value="Amdase"/>
    <property type="match status" value="1"/>
</dbReference>
<dbReference type="PIRSF" id="PIRSF015736">
    <property type="entry name" value="MI"/>
    <property type="match status" value="1"/>
</dbReference>